<accession>P80766</accession>
<organism>
    <name type="scientific">Phaseolus vulgaris</name>
    <name type="common">Kidney bean</name>
    <name type="synonym">French bean</name>
    <dbReference type="NCBI Taxonomy" id="3885"/>
    <lineage>
        <taxon>Eukaryota</taxon>
        <taxon>Viridiplantae</taxon>
        <taxon>Streptophyta</taxon>
        <taxon>Embryophyta</taxon>
        <taxon>Tracheophyta</taxon>
        <taxon>Spermatophyta</taxon>
        <taxon>Magnoliopsida</taxon>
        <taxon>eudicotyledons</taxon>
        <taxon>Gunneridae</taxon>
        <taxon>Pentapetalae</taxon>
        <taxon>rosids</taxon>
        <taxon>fabids</taxon>
        <taxon>Fabales</taxon>
        <taxon>Fabaceae</taxon>
        <taxon>Papilionoideae</taxon>
        <taxon>50 kb inversion clade</taxon>
        <taxon>NPAAA clade</taxon>
        <taxon>indigoferoid/millettioid clade</taxon>
        <taxon>Phaseoleae</taxon>
        <taxon>Phaseolus</taxon>
    </lineage>
</organism>
<proteinExistence type="evidence at protein level"/>
<dbReference type="GO" id="GO:0005576">
    <property type="term" value="C:extracellular region"/>
    <property type="evidence" value="ECO:0007669"/>
    <property type="project" value="UniProtKB-KW"/>
</dbReference>
<keyword id="KW-0134">Cell wall</keyword>
<keyword id="KW-0903">Direct protein sequencing</keyword>
<keyword id="KW-0964">Secreted</keyword>
<name>CWP07_PHAVU</name>
<reference evidence="3" key="1">
    <citation type="journal article" date="1997" name="J. Biol. Chem.">
        <title>Differential extraction and protein sequencing reveals major differences in patterns of primary cell wall proteins from plants.</title>
        <authorList>
            <person name="Robertson D."/>
            <person name="Mitchell G.P."/>
            <person name="Gilroy J.S."/>
            <person name="Gerrish C."/>
            <person name="Bolwell G.P."/>
            <person name="Slabas A.R."/>
        </authorList>
    </citation>
    <scope>PROTEIN SEQUENCE</scope>
    <scope>SUBCELLULAR LOCATION</scope>
</reference>
<evidence type="ECO:0000269" key="1">
    <source>
    </source>
</evidence>
<evidence type="ECO:0000303" key="2">
    <source>
    </source>
</evidence>
<evidence type="ECO:0000305" key="3"/>
<protein>
    <recommendedName>
        <fullName>53 kDa cell wall protein</fullName>
    </recommendedName>
</protein>
<feature type="chain" id="PRO_0000079646" description="53 kDa cell wall protein">
    <location>
        <begin position="1"/>
        <end position="14" status="greater than"/>
    </location>
</feature>
<feature type="non-terminal residue" evidence="2">
    <location>
        <position position="14"/>
    </location>
</feature>
<sequence>VAGRSVVKIAEGYL</sequence>
<comment type="subcellular location">
    <subcellularLocation>
        <location evidence="1">Secreted</location>
        <location evidence="1">Cell wall</location>
    </subcellularLocation>
</comment>